<protein>
    <recommendedName>
        <fullName evidence="1">Proline--tRNA ligase</fullName>
        <ecNumber evidence="1">6.1.1.15</ecNumber>
    </recommendedName>
    <alternativeName>
        <fullName evidence="1">Prolyl-tRNA synthetase</fullName>
        <shortName evidence="1">ProRS</shortName>
    </alternativeName>
</protein>
<sequence>MRYSEMFLPTEREIPSDAEVVSHQLMLRAGMIRKLSAGIYSYLPLGYRVLRKVEQIIREEMNRAGAQEVYLPMVQPAELWQESGRWEHYGKELLRFRDRHDREYCLGPTHEEVITDLVRHEIKTYRQLPKNLYQIQTKFRDEIRPRFGVMRGREFGMKDAYSFDADEEGAEISYQKMFEAYKRIFARCGLRFRPVEADSGTIGGSFSHEFMVMADSGEDGLVFCATCSYAANLEKAEVHPPEKMEISNDEMLLLTEVHTPNARTIDEVCAFLNVTPQEIVKTLIFNADGNPVAVLVRGDEEVNEIKVKNYLKCQELELAMDDMIQDVTGAPRGFAGAIGIKKARILADYSLLNMKNVVMGANKEDYHLRNVNEGRDFQISAFADLKVARETDSCPRCQGALKFARGIEVGHVFKLGTKYSKAMGASYLDKNGKEQIMIMGCYGIGTGRTVAACIEQNHDENGIVWPMPISPYQVIITPVNMNDKALAETAERLYESLAGKGAEVLLDDRDERAGVKFKDADLIGIPIRVTVGPKKLAEGKVEVRLRDTGETSDVQVDSVEKMILRVIEGKMSESYLIF</sequence>
<reference key="1">
    <citation type="journal article" date="2007" name="Proc. Natl. Acad. Sci. U.S.A.">
        <title>The genome of Syntrophus aciditrophicus: life at the thermodynamic limit of microbial growth.</title>
        <authorList>
            <person name="McInerney M.J."/>
            <person name="Rohlin L."/>
            <person name="Mouttaki H."/>
            <person name="Kim U."/>
            <person name="Krupp R.S."/>
            <person name="Rios-Hernandez L."/>
            <person name="Sieber J."/>
            <person name="Struchtemeyer C.G."/>
            <person name="Bhattacharyya A."/>
            <person name="Campbell J.W."/>
            <person name="Gunsalus R.P."/>
        </authorList>
    </citation>
    <scope>NUCLEOTIDE SEQUENCE [LARGE SCALE GENOMIC DNA]</scope>
    <source>
        <strain>SB</strain>
    </source>
</reference>
<name>SYP_SYNAS</name>
<accession>Q2LTR7</accession>
<organism>
    <name type="scientific">Syntrophus aciditrophicus (strain SB)</name>
    <dbReference type="NCBI Taxonomy" id="56780"/>
    <lineage>
        <taxon>Bacteria</taxon>
        <taxon>Pseudomonadati</taxon>
        <taxon>Thermodesulfobacteriota</taxon>
        <taxon>Syntrophia</taxon>
        <taxon>Syntrophales</taxon>
        <taxon>Syntrophaceae</taxon>
        <taxon>Syntrophus</taxon>
    </lineage>
</organism>
<comment type="function">
    <text evidence="1">Catalyzes the attachment of proline to tRNA(Pro) in a two-step reaction: proline is first activated by ATP to form Pro-AMP and then transferred to the acceptor end of tRNA(Pro). As ProRS can inadvertently accommodate and process non-cognate amino acids such as alanine and cysteine, to avoid such errors it has two additional distinct editing activities against alanine. One activity is designated as 'pretransfer' editing and involves the tRNA(Pro)-independent hydrolysis of activated Ala-AMP. The other activity is designated 'posttransfer' editing and involves deacylation of mischarged Ala-tRNA(Pro). The misacylated Cys-tRNA(Pro) is not edited by ProRS.</text>
</comment>
<comment type="catalytic activity">
    <reaction evidence="1">
        <text>tRNA(Pro) + L-proline + ATP = L-prolyl-tRNA(Pro) + AMP + diphosphate</text>
        <dbReference type="Rhea" id="RHEA:14305"/>
        <dbReference type="Rhea" id="RHEA-COMP:9700"/>
        <dbReference type="Rhea" id="RHEA-COMP:9702"/>
        <dbReference type="ChEBI" id="CHEBI:30616"/>
        <dbReference type="ChEBI" id="CHEBI:33019"/>
        <dbReference type="ChEBI" id="CHEBI:60039"/>
        <dbReference type="ChEBI" id="CHEBI:78442"/>
        <dbReference type="ChEBI" id="CHEBI:78532"/>
        <dbReference type="ChEBI" id="CHEBI:456215"/>
        <dbReference type="EC" id="6.1.1.15"/>
    </reaction>
</comment>
<comment type="subunit">
    <text evidence="1">Homodimer.</text>
</comment>
<comment type="subcellular location">
    <subcellularLocation>
        <location evidence="1">Cytoplasm</location>
    </subcellularLocation>
</comment>
<comment type="domain">
    <text evidence="1">Consists of three domains: the N-terminal catalytic domain, the editing domain and the C-terminal anticodon-binding domain.</text>
</comment>
<comment type="similarity">
    <text evidence="1">Belongs to the class-II aminoacyl-tRNA synthetase family. ProS type 1 subfamily.</text>
</comment>
<comment type="sequence caution" evidence="2">
    <conflict type="erroneous initiation">
        <sequence resource="EMBL-CDS" id="ABC77481"/>
    </conflict>
</comment>
<keyword id="KW-0030">Aminoacyl-tRNA synthetase</keyword>
<keyword id="KW-0067">ATP-binding</keyword>
<keyword id="KW-0963">Cytoplasm</keyword>
<keyword id="KW-0436">Ligase</keyword>
<keyword id="KW-0547">Nucleotide-binding</keyword>
<keyword id="KW-0648">Protein biosynthesis</keyword>
<keyword id="KW-1185">Reference proteome</keyword>
<feature type="chain" id="PRO_0000248799" description="Proline--tRNA ligase">
    <location>
        <begin position="1"/>
        <end position="578"/>
    </location>
</feature>
<proteinExistence type="inferred from homology"/>
<dbReference type="EC" id="6.1.1.15" evidence="1"/>
<dbReference type="EMBL" id="CP000252">
    <property type="protein sequence ID" value="ABC77481.1"/>
    <property type="status" value="ALT_INIT"/>
    <property type="molecule type" value="Genomic_DNA"/>
</dbReference>
<dbReference type="RefSeq" id="WP_041584864.1">
    <property type="nucleotide sequence ID" value="NC_007759.1"/>
</dbReference>
<dbReference type="SMR" id="Q2LTR7"/>
<dbReference type="FunCoup" id="Q2LTR7">
    <property type="interactions" value="476"/>
</dbReference>
<dbReference type="STRING" id="56780.SYN_00905"/>
<dbReference type="KEGG" id="sat:SYN_00905"/>
<dbReference type="eggNOG" id="COG0442">
    <property type="taxonomic scope" value="Bacteria"/>
</dbReference>
<dbReference type="HOGENOM" id="CLU_016739_0_0_7"/>
<dbReference type="InParanoid" id="Q2LTR7"/>
<dbReference type="OrthoDB" id="9809052at2"/>
<dbReference type="Proteomes" id="UP000001933">
    <property type="component" value="Chromosome"/>
</dbReference>
<dbReference type="GO" id="GO:0005829">
    <property type="term" value="C:cytosol"/>
    <property type="evidence" value="ECO:0007669"/>
    <property type="project" value="TreeGrafter"/>
</dbReference>
<dbReference type="GO" id="GO:0002161">
    <property type="term" value="F:aminoacyl-tRNA deacylase activity"/>
    <property type="evidence" value="ECO:0007669"/>
    <property type="project" value="InterPro"/>
</dbReference>
<dbReference type="GO" id="GO:0005524">
    <property type="term" value="F:ATP binding"/>
    <property type="evidence" value="ECO:0007669"/>
    <property type="project" value="UniProtKB-UniRule"/>
</dbReference>
<dbReference type="GO" id="GO:0004827">
    <property type="term" value="F:proline-tRNA ligase activity"/>
    <property type="evidence" value="ECO:0007669"/>
    <property type="project" value="UniProtKB-UniRule"/>
</dbReference>
<dbReference type="GO" id="GO:0006433">
    <property type="term" value="P:prolyl-tRNA aminoacylation"/>
    <property type="evidence" value="ECO:0007669"/>
    <property type="project" value="UniProtKB-UniRule"/>
</dbReference>
<dbReference type="CDD" id="cd04334">
    <property type="entry name" value="ProRS-INS"/>
    <property type="match status" value="1"/>
</dbReference>
<dbReference type="CDD" id="cd00861">
    <property type="entry name" value="ProRS_anticodon_short"/>
    <property type="match status" value="1"/>
</dbReference>
<dbReference type="CDD" id="cd00779">
    <property type="entry name" value="ProRS_core_prok"/>
    <property type="match status" value="1"/>
</dbReference>
<dbReference type="FunFam" id="3.30.930.10:FF:000065">
    <property type="entry name" value="Proline--tRNA ligase"/>
    <property type="match status" value="1"/>
</dbReference>
<dbReference type="FunFam" id="3.30.930.10:FF:000066">
    <property type="entry name" value="Proline--tRNA ligase"/>
    <property type="match status" value="1"/>
</dbReference>
<dbReference type="FunFam" id="3.40.50.800:FF:000011">
    <property type="entry name" value="Proline--tRNA ligase"/>
    <property type="match status" value="1"/>
</dbReference>
<dbReference type="Gene3D" id="3.40.50.800">
    <property type="entry name" value="Anticodon-binding domain"/>
    <property type="match status" value="1"/>
</dbReference>
<dbReference type="Gene3D" id="3.30.930.10">
    <property type="entry name" value="Bira Bifunctional Protein, Domain 2"/>
    <property type="match status" value="2"/>
</dbReference>
<dbReference type="Gene3D" id="3.90.960.10">
    <property type="entry name" value="YbaK/aminoacyl-tRNA synthetase-associated domain"/>
    <property type="match status" value="1"/>
</dbReference>
<dbReference type="HAMAP" id="MF_01569">
    <property type="entry name" value="Pro_tRNA_synth_type1"/>
    <property type="match status" value="1"/>
</dbReference>
<dbReference type="InterPro" id="IPR002314">
    <property type="entry name" value="aa-tRNA-synt_IIb"/>
</dbReference>
<dbReference type="InterPro" id="IPR006195">
    <property type="entry name" value="aa-tRNA-synth_II"/>
</dbReference>
<dbReference type="InterPro" id="IPR045864">
    <property type="entry name" value="aa-tRNA-synth_II/BPL/LPL"/>
</dbReference>
<dbReference type="InterPro" id="IPR004154">
    <property type="entry name" value="Anticodon-bd"/>
</dbReference>
<dbReference type="InterPro" id="IPR036621">
    <property type="entry name" value="Anticodon-bd_dom_sf"/>
</dbReference>
<dbReference type="InterPro" id="IPR002316">
    <property type="entry name" value="Pro-tRNA-ligase_IIa"/>
</dbReference>
<dbReference type="InterPro" id="IPR004500">
    <property type="entry name" value="Pro-tRNA-synth_IIa_bac-type"/>
</dbReference>
<dbReference type="InterPro" id="IPR023717">
    <property type="entry name" value="Pro-tRNA-Synthase_IIa_type1"/>
</dbReference>
<dbReference type="InterPro" id="IPR050062">
    <property type="entry name" value="Pro-tRNA_synthetase"/>
</dbReference>
<dbReference type="InterPro" id="IPR044140">
    <property type="entry name" value="ProRS_anticodon_short"/>
</dbReference>
<dbReference type="InterPro" id="IPR033730">
    <property type="entry name" value="ProRS_core_prok"/>
</dbReference>
<dbReference type="InterPro" id="IPR036754">
    <property type="entry name" value="YbaK/aa-tRNA-synt-asso_dom_sf"/>
</dbReference>
<dbReference type="InterPro" id="IPR007214">
    <property type="entry name" value="YbaK/aa-tRNA-synth-assoc-dom"/>
</dbReference>
<dbReference type="NCBIfam" id="NF006625">
    <property type="entry name" value="PRK09194.1"/>
    <property type="match status" value="1"/>
</dbReference>
<dbReference type="NCBIfam" id="TIGR00409">
    <property type="entry name" value="proS_fam_II"/>
    <property type="match status" value="1"/>
</dbReference>
<dbReference type="PANTHER" id="PTHR42753">
    <property type="entry name" value="MITOCHONDRIAL RIBOSOME PROTEIN L39/PROLYL-TRNA LIGASE FAMILY MEMBER"/>
    <property type="match status" value="1"/>
</dbReference>
<dbReference type="PANTHER" id="PTHR42753:SF2">
    <property type="entry name" value="PROLINE--TRNA LIGASE"/>
    <property type="match status" value="1"/>
</dbReference>
<dbReference type="Pfam" id="PF03129">
    <property type="entry name" value="HGTP_anticodon"/>
    <property type="match status" value="1"/>
</dbReference>
<dbReference type="Pfam" id="PF00587">
    <property type="entry name" value="tRNA-synt_2b"/>
    <property type="match status" value="1"/>
</dbReference>
<dbReference type="Pfam" id="PF04073">
    <property type="entry name" value="tRNA_edit"/>
    <property type="match status" value="1"/>
</dbReference>
<dbReference type="PIRSF" id="PIRSF001535">
    <property type="entry name" value="ProRS_1"/>
    <property type="match status" value="1"/>
</dbReference>
<dbReference type="PRINTS" id="PR01046">
    <property type="entry name" value="TRNASYNTHPRO"/>
</dbReference>
<dbReference type="SUPFAM" id="SSF52954">
    <property type="entry name" value="Class II aaRS ABD-related"/>
    <property type="match status" value="1"/>
</dbReference>
<dbReference type="SUPFAM" id="SSF55681">
    <property type="entry name" value="Class II aaRS and biotin synthetases"/>
    <property type="match status" value="1"/>
</dbReference>
<dbReference type="SUPFAM" id="SSF55826">
    <property type="entry name" value="YbaK/ProRS associated domain"/>
    <property type="match status" value="1"/>
</dbReference>
<dbReference type="PROSITE" id="PS50862">
    <property type="entry name" value="AA_TRNA_LIGASE_II"/>
    <property type="match status" value="1"/>
</dbReference>
<gene>
    <name evidence="1" type="primary">proS</name>
    <name type="ordered locus">SYNAS_16020</name>
    <name type="ORF">SYN_00905</name>
</gene>
<evidence type="ECO:0000255" key="1">
    <source>
        <dbReference type="HAMAP-Rule" id="MF_01569"/>
    </source>
</evidence>
<evidence type="ECO:0000305" key="2"/>